<accession>Q8PC34</accession>
<organism>
    <name type="scientific">Xanthomonas campestris pv. campestris (strain ATCC 33913 / DSM 3586 / NCPPB 528 / LMG 568 / P 25)</name>
    <dbReference type="NCBI Taxonomy" id="190485"/>
    <lineage>
        <taxon>Bacteria</taxon>
        <taxon>Pseudomonadati</taxon>
        <taxon>Pseudomonadota</taxon>
        <taxon>Gammaproteobacteria</taxon>
        <taxon>Lysobacterales</taxon>
        <taxon>Lysobacteraceae</taxon>
        <taxon>Xanthomonas</taxon>
    </lineage>
</organism>
<gene>
    <name evidence="1" type="primary">rplO</name>
    <name type="ordered locus">XCC0914</name>
</gene>
<keyword id="KW-1185">Reference proteome</keyword>
<keyword id="KW-0687">Ribonucleoprotein</keyword>
<keyword id="KW-0689">Ribosomal protein</keyword>
<keyword id="KW-0694">RNA-binding</keyword>
<keyword id="KW-0699">rRNA-binding</keyword>
<proteinExistence type="inferred from homology"/>
<dbReference type="EMBL" id="AE008922">
    <property type="protein sequence ID" value="AAM40224.1"/>
    <property type="molecule type" value="Genomic_DNA"/>
</dbReference>
<dbReference type="RefSeq" id="NP_636300.2">
    <property type="nucleotide sequence ID" value="NC_003902.1"/>
</dbReference>
<dbReference type="RefSeq" id="WP_012439114.1">
    <property type="nucleotide sequence ID" value="NC_003902.1"/>
</dbReference>
<dbReference type="SMR" id="Q8PC34"/>
<dbReference type="STRING" id="190485.XCC0914"/>
<dbReference type="EnsemblBacteria" id="AAM40224">
    <property type="protein sequence ID" value="AAM40224"/>
    <property type="gene ID" value="XCC0914"/>
</dbReference>
<dbReference type="GeneID" id="95583333"/>
<dbReference type="KEGG" id="xcc:XCC0914"/>
<dbReference type="PATRIC" id="fig|190485.4.peg.986"/>
<dbReference type="eggNOG" id="COG0200">
    <property type="taxonomic scope" value="Bacteria"/>
</dbReference>
<dbReference type="HOGENOM" id="CLU_055188_4_2_6"/>
<dbReference type="OrthoDB" id="9810293at2"/>
<dbReference type="Proteomes" id="UP000001010">
    <property type="component" value="Chromosome"/>
</dbReference>
<dbReference type="GO" id="GO:0022625">
    <property type="term" value="C:cytosolic large ribosomal subunit"/>
    <property type="evidence" value="ECO:0000318"/>
    <property type="project" value="GO_Central"/>
</dbReference>
<dbReference type="GO" id="GO:0019843">
    <property type="term" value="F:rRNA binding"/>
    <property type="evidence" value="ECO:0007669"/>
    <property type="project" value="UniProtKB-UniRule"/>
</dbReference>
<dbReference type="GO" id="GO:0003735">
    <property type="term" value="F:structural constituent of ribosome"/>
    <property type="evidence" value="ECO:0000318"/>
    <property type="project" value="GO_Central"/>
</dbReference>
<dbReference type="GO" id="GO:0006412">
    <property type="term" value="P:translation"/>
    <property type="evidence" value="ECO:0007669"/>
    <property type="project" value="UniProtKB-UniRule"/>
</dbReference>
<dbReference type="FunFam" id="3.100.10.10:FF:000008">
    <property type="entry name" value="50S ribosomal protein L15"/>
    <property type="match status" value="1"/>
</dbReference>
<dbReference type="Gene3D" id="3.100.10.10">
    <property type="match status" value="1"/>
</dbReference>
<dbReference type="HAMAP" id="MF_01341">
    <property type="entry name" value="Ribosomal_uL15"/>
    <property type="match status" value="1"/>
</dbReference>
<dbReference type="InterPro" id="IPR030878">
    <property type="entry name" value="Ribosomal_uL15"/>
</dbReference>
<dbReference type="InterPro" id="IPR021131">
    <property type="entry name" value="Ribosomal_uL15/eL18"/>
</dbReference>
<dbReference type="InterPro" id="IPR036227">
    <property type="entry name" value="Ribosomal_uL15/eL18_sf"/>
</dbReference>
<dbReference type="InterPro" id="IPR005749">
    <property type="entry name" value="Ribosomal_uL15_bac-type"/>
</dbReference>
<dbReference type="InterPro" id="IPR001196">
    <property type="entry name" value="Ribosomal_uL15_CS"/>
</dbReference>
<dbReference type="NCBIfam" id="TIGR01071">
    <property type="entry name" value="rplO_bact"/>
    <property type="match status" value="1"/>
</dbReference>
<dbReference type="PANTHER" id="PTHR12934">
    <property type="entry name" value="50S RIBOSOMAL PROTEIN L15"/>
    <property type="match status" value="1"/>
</dbReference>
<dbReference type="PANTHER" id="PTHR12934:SF11">
    <property type="entry name" value="LARGE RIBOSOMAL SUBUNIT PROTEIN UL15M"/>
    <property type="match status" value="1"/>
</dbReference>
<dbReference type="Pfam" id="PF00828">
    <property type="entry name" value="Ribosomal_L27A"/>
    <property type="match status" value="1"/>
</dbReference>
<dbReference type="SUPFAM" id="SSF52080">
    <property type="entry name" value="Ribosomal proteins L15p and L18e"/>
    <property type="match status" value="1"/>
</dbReference>
<dbReference type="PROSITE" id="PS00475">
    <property type="entry name" value="RIBOSOMAL_L15"/>
    <property type="match status" value="1"/>
</dbReference>
<comment type="function">
    <text evidence="1">Binds to the 23S rRNA.</text>
</comment>
<comment type="subunit">
    <text evidence="1">Part of the 50S ribosomal subunit.</text>
</comment>
<comment type="similarity">
    <text evidence="1">Belongs to the universal ribosomal protein uL15 family.</text>
</comment>
<name>RL15_XANCP</name>
<reference key="1">
    <citation type="journal article" date="2002" name="Nature">
        <title>Comparison of the genomes of two Xanthomonas pathogens with differing host specificities.</title>
        <authorList>
            <person name="da Silva A.C.R."/>
            <person name="Ferro J.A."/>
            <person name="Reinach F.C."/>
            <person name="Farah C.S."/>
            <person name="Furlan L.R."/>
            <person name="Quaggio R.B."/>
            <person name="Monteiro-Vitorello C.B."/>
            <person name="Van Sluys M.A."/>
            <person name="Almeida N.F. Jr."/>
            <person name="Alves L.M.C."/>
            <person name="do Amaral A.M."/>
            <person name="Bertolini M.C."/>
            <person name="Camargo L.E.A."/>
            <person name="Camarotte G."/>
            <person name="Cannavan F."/>
            <person name="Cardozo J."/>
            <person name="Chambergo F."/>
            <person name="Ciapina L.P."/>
            <person name="Cicarelli R.M.B."/>
            <person name="Coutinho L.L."/>
            <person name="Cursino-Santos J.R."/>
            <person name="El-Dorry H."/>
            <person name="Faria J.B."/>
            <person name="Ferreira A.J.S."/>
            <person name="Ferreira R.C.C."/>
            <person name="Ferro M.I.T."/>
            <person name="Formighieri E.F."/>
            <person name="Franco M.C."/>
            <person name="Greggio C.C."/>
            <person name="Gruber A."/>
            <person name="Katsuyama A.M."/>
            <person name="Kishi L.T."/>
            <person name="Leite R.P."/>
            <person name="Lemos E.G.M."/>
            <person name="Lemos M.V.F."/>
            <person name="Locali E.C."/>
            <person name="Machado M.A."/>
            <person name="Madeira A.M.B.N."/>
            <person name="Martinez-Rossi N.M."/>
            <person name="Martins E.C."/>
            <person name="Meidanis J."/>
            <person name="Menck C.F.M."/>
            <person name="Miyaki C.Y."/>
            <person name="Moon D.H."/>
            <person name="Moreira L.M."/>
            <person name="Novo M.T.M."/>
            <person name="Okura V.K."/>
            <person name="Oliveira M.C."/>
            <person name="Oliveira V.R."/>
            <person name="Pereira H.A."/>
            <person name="Rossi A."/>
            <person name="Sena J.A.D."/>
            <person name="Silva C."/>
            <person name="de Souza R.F."/>
            <person name="Spinola L.A.F."/>
            <person name="Takita M.A."/>
            <person name="Tamura R.E."/>
            <person name="Teixeira E.C."/>
            <person name="Tezza R.I.D."/>
            <person name="Trindade dos Santos M."/>
            <person name="Truffi D."/>
            <person name="Tsai S.M."/>
            <person name="White F.F."/>
            <person name="Setubal J.C."/>
            <person name="Kitajima J.P."/>
        </authorList>
    </citation>
    <scope>NUCLEOTIDE SEQUENCE [LARGE SCALE GENOMIC DNA]</scope>
    <source>
        <strain>ATCC 33913 / DSM 3586 / NCPPB 528 / LMG 568 / P 25</strain>
    </source>
</reference>
<sequence length="147" mass="15393">MTMHLNDLKPADGARTERTRVGRGIGSGLGKTCGRGHKGSFARKGGGKIKAGFEGGQTPMQRRLPKIGFRSKMARDSAEVLSYQLDKLEAGEIDFAALRAANLVPSRAKKAKIVLKGELSKKFVLKGVAATAGAKAAIEAAGGSVEE</sequence>
<evidence type="ECO:0000255" key="1">
    <source>
        <dbReference type="HAMAP-Rule" id="MF_01341"/>
    </source>
</evidence>
<evidence type="ECO:0000256" key="2">
    <source>
        <dbReference type="SAM" id="MobiDB-lite"/>
    </source>
</evidence>
<evidence type="ECO:0000305" key="3"/>
<protein>
    <recommendedName>
        <fullName evidence="1">Large ribosomal subunit protein uL15</fullName>
    </recommendedName>
    <alternativeName>
        <fullName evidence="3">50S ribosomal protein L15</fullName>
    </alternativeName>
</protein>
<feature type="chain" id="PRO_0000104853" description="Large ribosomal subunit protein uL15">
    <location>
        <begin position="1"/>
        <end position="147"/>
    </location>
</feature>
<feature type="region of interest" description="Disordered" evidence="2">
    <location>
        <begin position="1"/>
        <end position="64"/>
    </location>
</feature>
<feature type="compositionally biased region" description="Basic and acidic residues" evidence="2">
    <location>
        <begin position="1"/>
        <end position="20"/>
    </location>
</feature>
<feature type="compositionally biased region" description="Gly residues" evidence="2">
    <location>
        <begin position="23"/>
        <end position="33"/>
    </location>
</feature>
<feature type="compositionally biased region" description="Basic residues" evidence="2">
    <location>
        <begin position="34"/>
        <end position="47"/>
    </location>
</feature>